<sequence>MLYKGDTLYLDWLEDGIAELVFDAPGSVNKLDTATVASLGEAIGVLEQQSDLKGLLLRSNKAAFIVGADITEFLSLFLVPEEQLSQWLHFANSVFNRLEDLPVPTIAAVNGYALGGGCECVLATDYRLATPDLRIGLPETKLGIMPGFGGSVRMPRMLGADSALEIIAAGKDVGADQALKIGLVDGVVKAEKLVEGAKAVLRQAINGDLDWKAKRQPKLEPLKLSKIEATMSFTIAKGMVAQTAGKHYPAPITAVKTIEAAARFGREEALNLENKSFVPLAHTNEARALVGIFLNDQYVKGKAKKLTKDVETPKQAAVLGAGIMGGGIAYQSAWKGVPVVMKDINDKSLTLGMTEAAKLLNKQLERGKIDGLKLAGVISTIHPTLDYAGFDRVDIVVEAVVENPKVKKAVLAETEQKVRQDTVLASNTSTIPISELANALERPENFCGMHFFNPVHRMPLVEIIRGEKSSDETIAKVVAWASKMGKTPIVVNDCPGFFVNRVLFPYFAGFSQLLRDGADFRKIDKVMEKQFGWPMGPAYLLDVVGIDTAHHAQAVMAAGFPQRMQKDYRDAIDALFDANRFGQKNGLGFWRYKEDSKGKPKKEEDAAVEDLLAEVSQPKRDFSEEEIIARMMIPMVNEVVRCLEEGIIATPAEADMALVYGLGFPPFHGGAFRWLDTLGSAKYLDMAQQYQHLGPLYEVPEGLRNKARHNEPYYPPVEPARPVGDLKTA</sequence>
<organism>
    <name type="scientific">Escherichia coli (strain K12 / MC4100 / BW2952)</name>
    <dbReference type="NCBI Taxonomy" id="595496"/>
    <lineage>
        <taxon>Bacteria</taxon>
        <taxon>Pseudomonadati</taxon>
        <taxon>Pseudomonadota</taxon>
        <taxon>Gammaproteobacteria</taxon>
        <taxon>Enterobacterales</taxon>
        <taxon>Enterobacteriaceae</taxon>
        <taxon>Escherichia</taxon>
    </lineage>
</organism>
<proteinExistence type="inferred from homology"/>
<feature type="chain" id="PRO_1000215738" description="Fatty acid oxidation complex subunit alpha">
    <location>
        <begin position="1"/>
        <end position="729"/>
    </location>
</feature>
<feature type="region of interest" description="Enoyl-CoA hydratase/isomerase" evidence="1">
    <location>
        <begin position="1"/>
        <end position="189"/>
    </location>
</feature>
<feature type="region of interest" description="3-hydroxyacyl-CoA dehydrogenase" evidence="1">
    <location>
        <begin position="311"/>
        <end position="729"/>
    </location>
</feature>
<feature type="region of interest" description="Disordered" evidence="2">
    <location>
        <begin position="708"/>
        <end position="729"/>
    </location>
</feature>
<feature type="active site" description="For 3-hydroxyacyl-CoA dehydrogenase activity" evidence="1">
    <location>
        <position position="450"/>
    </location>
</feature>
<feature type="binding site" evidence="1">
    <location>
        <position position="296"/>
    </location>
    <ligand>
        <name>substrate</name>
    </ligand>
</feature>
<feature type="binding site" evidence="1">
    <location>
        <position position="324"/>
    </location>
    <ligand>
        <name>NAD(+)</name>
        <dbReference type="ChEBI" id="CHEBI:57540"/>
    </ligand>
</feature>
<feature type="binding site" evidence="1">
    <location>
        <position position="343"/>
    </location>
    <ligand>
        <name>NAD(+)</name>
        <dbReference type="ChEBI" id="CHEBI:57540"/>
    </ligand>
</feature>
<feature type="binding site" evidence="1">
    <location>
        <begin position="400"/>
        <end position="402"/>
    </location>
    <ligand>
        <name>NAD(+)</name>
        <dbReference type="ChEBI" id="CHEBI:57540"/>
    </ligand>
</feature>
<feature type="binding site" evidence="1">
    <location>
        <position position="407"/>
    </location>
    <ligand>
        <name>NAD(+)</name>
        <dbReference type="ChEBI" id="CHEBI:57540"/>
    </ligand>
</feature>
<feature type="binding site" evidence="1">
    <location>
        <position position="429"/>
    </location>
    <ligand>
        <name>NAD(+)</name>
        <dbReference type="ChEBI" id="CHEBI:57540"/>
    </ligand>
</feature>
<feature type="binding site" evidence="1">
    <location>
        <position position="453"/>
    </location>
    <ligand>
        <name>NAD(+)</name>
        <dbReference type="ChEBI" id="CHEBI:57540"/>
    </ligand>
</feature>
<feature type="binding site" evidence="1">
    <location>
        <position position="500"/>
    </location>
    <ligand>
        <name>substrate</name>
    </ligand>
</feature>
<feature type="binding site" evidence="1">
    <location>
        <position position="660"/>
    </location>
    <ligand>
        <name>substrate</name>
    </ligand>
</feature>
<feature type="site" description="Important for catalytic activity" evidence="1">
    <location>
        <position position="119"/>
    </location>
</feature>
<feature type="site" description="Important for catalytic activity" evidence="1">
    <location>
        <position position="139"/>
    </location>
</feature>
<protein>
    <recommendedName>
        <fullName evidence="1">Fatty acid oxidation complex subunit alpha</fullName>
    </recommendedName>
    <domain>
        <recommendedName>
            <fullName evidence="1">Enoyl-CoA hydratase/Delta(3)-cis-Delta(2)-trans-enoyl-CoA isomerase/3-hydroxybutyryl-CoA epimerase</fullName>
            <ecNumber evidence="1">4.2.1.17</ecNumber>
            <ecNumber evidence="1">5.1.2.3</ecNumber>
            <ecNumber evidence="1">5.3.3.8</ecNumber>
        </recommendedName>
    </domain>
    <domain>
        <recommendedName>
            <fullName evidence="1">3-hydroxyacyl-CoA dehydrogenase</fullName>
            <ecNumber evidence="1">1.1.1.35</ecNumber>
        </recommendedName>
    </domain>
</protein>
<comment type="function">
    <text evidence="1">Involved in the aerobic and anaerobic degradation of long-chain fatty acids via beta-oxidation cycle. Catalyzes the formation of 3-oxoacyl-CoA from enoyl-CoA via L-3-hydroxyacyl-CoA. It can also use D-3-hydroxyacyl-CoA and cis-3-enoyl-CoA as substrate.</text>
</comment>
<comment type="catalytic activity">
    <reaction evidence="1">
        <text>a (3S)-3-hydroxyacyl-CoA + NAD(+) = a 3-oxoacyl-CoA + NADH + H(+)</text>
        <dbReference type="Rhea" id="RHEA:22432"/>
        <dbReference type="ChEBI" id="CHEBI:15378"/>
        <dbReference type="ChEBI" id="CHEBI:57318"/>
        <dbReference type="ChEBI" id="CHEBI:57540"/>
        <dbReference type="ChEBI" id="CHEBI:57945"/>
        <dbReference type="ChEBI" id="CHEBI:90726"/>
        <dbReference type="EC" id="1.1.1.35"/>
    </reaction>
</comment>
<comment type="catalytic activity">
    <reaction evidence="1">
        <text>a (3S)-3-hydroxyacyl-CoA = a (2E)-enoyl-CoA + H2O</text>
        <dbReference type="Rhea" id="RHEA:16105"/>
        <dbReference type="ChEBI" id="CHEBI:15377"/>
        <dbReference type="ChEBI" id="CHEBI:57318"/>
        <dbReference type="ChEBI" id="CHEBI:58856"/>
        <dbReference type="EC" id="4.2.1.17"/>
    </reaction>
</comment>
<comment type="catalytic activity">
    <reaction evidence="1">
        <text>a 4-saturated-(3S)-3-hydroxyacyl-CoA = a (3E)-enoyl-CoA + H2O</text>
        <dbReference type="Rhea" id="RHEA:20724"/>
        <dbReference type="ChEBI" id="CHEBI:15377"/>
        <dbReference type="ChEBI" id="CHEBI:58521"/>
        <dbReference type="ChEBI" id="CHEBI:137480"/>
        <dbReference type="EC" id="4.2.1.17"/>
    </reaction>
</comment>
<comment type="catalytic activity">
    <reaction evidence="1">
        <text>(3S)-3-hydroxybutanoyl-CoA = (3R)-3-hydroxybutanoyl-CoA</text>
        <dbReference type="Rhea" id="RHEA:21760"/>
        <dbReference type="ChEBI" id="CHEBI:57315"/>
        <dbReference type="ChEBI" id="CHEBI:57316"/>
        <dbReference type="EC" id="5.1.2.3"/>
    </reaction>
</comment>
<comment type="catalytic activity">
    <reaction evidence="1">
        <text>a (3Z)-enoyl-CoA = a 4-saturated (2E)-enoyl-CoA</text>
        <dbReference type="Rhea" id="RHEA:45900"/>
        <dbReference type="ChEBI" id="CHEBI:85097"/>
        <dbReference type="ChEBI" id="CHEBI:85489"/>
        <dbReference type="EC" id="5.3.3.8"/>
    </reaction>
</comment>
<comment type="catalytic activity">
    <reaction evidence="1">
        <text>a (3E)-enoyl-CoA = a 4-saturated (2E)-enoyl-CoA</text>
        <dbReference type="Rhea" id="RHEA:45228"/>
        <dbReference type="ChEBI" id="CHEBI:58521"/>
        <dbReference type="ChEBI" id="CHEBI:85097"/>
        <dbReference type="EC" id="5.3.3.8"/>
    </reaction>
</comment>
<comment type="pathway">
    <text evidence="1">Lipid metabolism; fatty acid beta-oxidation.</text>
</comment>
<comment type="subunit">
    <text evidence="1">Heterotetramer of two alpha chains (FadB) and two beta chains (FadA).</text>
</comment>
<comment type="similarity">
    <text evidence="1">In the N-terminal section; belongs to the enoyl-CoA hydratase/isomerase family.</text>
</comment>
<comment type="similarity">
    <text evidence="1">In the C-terminal section; belongs to the 3-hydroxyacyl-CoA dehydrogenase family.</text>
</comment>
<name>FADB_ECOBW</name>
<reference key="1">
    <citation type="journal article" date="2009" name="J. Bacteriol.">
        <title>Genomic sequencing reveals regulatory mutations and recombinational events in the widely used MC4100 lineage of Escherichia coli K-12.</title>
        <authorList>
            <person name="Ferenci T."/>
            <person name="Zhou Z."/>
            <person name="Betteridge T."/>
            <person name="Ren Y."/>
            <person name="Liu Y."/>
            <person name="Feng L."/>
            <person name="Reeves P.R."/>
            <person name="Wang L."/>
        </authorList>
    </citation>
    <scope>NUCLEOTIDE SEQUENCE [LARGE SCALE GENOMIC DNA]</scope>
    <source>
        <strain>K12 / MC4100 / BW2952</strain>
    </source>
</reference>
<dbReference type="EC" id="4.2.1.17" evidence="1"/>
<dbReference type="EC" id="5.1.2.3" evidence="1"/>
<dbReference type="EC" id="5.3.3.8" evidence="1"/>
<dbReference type="EC" id="1.1.1.35" evidence="1"/>
<dbReference type="EMBL" id="CP001396">
    <property type="protein sequence ID" value="ACR63159.1"/>
    <property type="molecule type" value="Genomic_DNA"/>
</dbReference>
<dbReference type="RefSeq" id="WP_000965936.1">
    <property type="nucleotide sequence ID" value="NC_012759.1"/>
</dbReference>
<dbReference type="SMR" id="C5A020"/>
<dbReference type="KEGG" id="ebw:BWG_3522"/>
<dbReference type="HOGENOM" id="CLU_009834_16_3_6"/>
<dbReference type="UniPathway" id="UPA00659"/>
<dbReference type="GO" id="GO:0036125">
    <property type="term" value="C:fatty acid beta-oxidation multienzyme complex"/>
    <property type="evidence" value="ECO:0007669"/>
    <property type="project" value="InterPro"/>
</dbReference>
<dbReference type="GO" id="GO:0008692">
    <property type="term" value="F:3-hydroxybutyryl-CoA epimerase activity"/>
    <property type="evidence" value="ECO:0007669"/>
    <property type="project" value="UniProtKB-UniRule"/>
</dbReference>
<dbReference type="GO" id="GO:0004165">
    <property type="term" value="F:delta(3)-delta(2)-enoyl-CoA isomerase activity"/>
    <property type="evidence" value="ECO:0007669"/>
    <property type="project" value="UniProtKB-UniRule"/>
</dbReference>
<dbReference type="GO" id="GO:0004300">
    <property type="term" value="F:enoyl-CoA hydratase activity"/>
    <property type="evidence" value="ECO:0007669"/>
    <property type="project" value="UniProtKB-UniRule"/>
</dbReference>
<dbReference type="GO" id="GO:0016509">
    <property type="term" value="F:long-chain-3-hydroxyacyl-CoA dehydrogenase activity"/>
    <property type="evidence" value="ECO:0007669"/>
    <property type="project" value="TreeGrafter"/>
</dbReference>
<dbReference type="GO" id="GO:0070403">
    <property type="term" value="F:NAD+ binding"/>
    <property type="evidence" value="ECO:0007669"/>
    <property type="project" value="InterPro"/>
</dbReference>
<dbReference type="GO" id="GO:0006635">
    <property type="term" value="P:fatty acid beta-oxidation"/>
    <property type="evidence" value="ECO:0007669"/>
    <property type="project" value="UniProtKB-UniRule"/>
</dbReference>
<dbReference type="CDD" id="cd06558">
    <property type="entry name" value="crotonase-like"/>
    <property type="match status" value="1"/>
</dbReference>
<dbReference type="FunFam" id="1.10.1040.50:FF:000001">
    <property type="entry name" value="Fatty acid oxidation complex subunit alpha"/>
    <property type="match status" value="1"/>
</dbReference>
<dbReference type="FunFam" id="3.90.226.10:FF:000018">
    <property type="entry name" value="Fatty acid oxidation complex subunit alpha"/>
    <property type="match status" value="1"/>
</dbReference>
<dbReference type="FunFam" id="3.40.50.720:FF:000009">
    <property type="entry name" value="Fatty oxidation complex, alpha subunit"/>
    <property type="match status" value="1"/>
</dbReference>
<dbReference type="Gene3D" id="1.10.1040.50">
    <property type="match status" value="1"/>
</dbReference>
<dbReference type="Gene3D" id="3.90.226.10">
    <property type="entry name" value="2-enoyl-CoA Hydratase, Chain A, domain 1"/>
    <property type="match status" value="1"/>
</dbReference>
<dbReference type="Gene3D" id="3.40.50.720">
    <property type="entry name" value="NAD(P)-binding Rossmann-like Domain"/>
    <property type="match status" value="1"/>
</dbReference>
<dbReference type="HAMAP" id="MF_01621">
    <property type="entry name" value="FadB"/>
    <property type="match status" value="1"/>
</dbReference>
<dbReference type="InterPro" id="IPR006180">
    <property type="entry name" value="3-OHacyl-CoA_DH_CS"/>
</dbReference>
<dbReference type="InterPro" id="IPR006176">
    <property type="entry name" value="3-OHacyl-CoA_DH_NAD-bd"/>
</dbReference>
<dbReference type="InterPro" id="IPR006108">
    <property type="entry name" value="3HC_DH_C"/>
</dbReference>
<dbReference type="InterPro" id="IPR008927">
    <property type="entry name" value="6-PGluconate_DH-like_C_sf"/>
</dbReference>
<dbReference type="InterPro" id="IPR029045">
    <property type="entry name" value="ClpP/crotonase-like_dom_sf"/>
</dbReference>
<dbReference type="InterPro" id="IPR018376">
    <property type="entry name" value="Enoyl-CoA_hyd/isom_CS"/>
</dbReference>
<dbReference type="InterPro" id="IPR001753">
    <property type="entry name" value="Enoyl-CoA_hydra/iso"/>
</dbReference>
<dbReference type="InterPro" id="IPR050136">
    <property type="entry name" value="FA_oxidation_alpha_subunit"/>
</dbReference>
<dbReference type="InterPro" id="IPR012799">
    <property type="entry name" value="FadB"/>
</dbReference>
<dbReference type="InterPro" id="IPR036291">
    <property type="entry name" value="NAD(P)-bd_dom_sf"/>
</dbReference>
<dbReference type="NCBIfam" id="TIGR02437">
    <property type="entry name" value="FadB"/>
    <property type="match status" value="1"/>
</dbReference>
<dbReference type="NCBIfam" id="NF008727">
    <property type="entry name" value="PRK11730.1"/>
    <property type="match status" value="1"/>
</dbReference>
<dbReference type="PANTHER" id="PTHR43612">
    <property type="entry name" value="TRIFUNCTIONAL ENZYME SUBUNIT ALPHA"/>
    <property type="match status" value="1"/>
</dbReference>
<dbReference type="PANTHER" id="PTHR43612:SF3">
    <property type="entry name" value="TRIFUNCTIONAL ENZYME SUBUNIT ALPHA, MITOCHONDRIAL"/>
    <property type="match status" value="1"/>
</dbReference>
<dbReference type="Pfam" id="PF00725">
    <property type="entry name" value="3HCDH"/>
    <property type="match status" value="2"/>
</dbReference>
<dbReference type="Pfam" id="PF02737">
    <property type="entry name" value="3HCDH_N"/>
    <property type="match status" value="1"/>
</dbReference>
<dbReference type="Pfam" id="PF00378">
    <property type="entry name" value="ECH_1"/>
    <property type="match status" value="1"/>
</dbReference>
<dbReference type="SUPFAM" id="SSF48179">
    <property type="entry name" value="6-phosphogluconate dehydrogenase C-terminal domain-like"/>
    <property type="match status" value="2"/>
</dbReference>
<dbReference type="SUPFAM" id="SSF52096">
    <property type="entry name" value="ClpP/crotonase"/>
    <property type="match status" value="1"/>
</dbReference>
<dbReference type="SUPFAM" id="SSF51735">
    <property type="entry name" value="NAD(P)-binding Rossmann-fold domains"/>
    <property type="match status" value="1"/>
</dbReference>
<dbReference type="PROSITE" id="PS00067">
    <property type="entry name" value="3HCDH"/>
    <property type="match status" value="1"/>
</dbReference>
<dbReference type="PROSITE" id="PS00166">
    <property type="entry name" value="ENOYL_COA_HYDRATASE"/>
    <property type="match status" value="1"/>
</dbReference>
<accession>C5A020</accession>
<gene>
    <name evidence="1" type="primary">fadB</name>
    <name type="ordered locus">BWG_3522</name>
</gene>
<evidence type="ECO:0000255" key="1">
    <source>
        <dbReference type="HAMAP-Rule" id="MF_01621"/>
    </source>
</evidence>
<evidence type="ECO:0000256" key="2">
    <source>
        <dbReference type="SAM" id="MobiDB-lite"/>
    </source>
</evidence>
<keyword id="KW-0276">Fatty acid metabolism</keyword>
<keyword id="KW-0413">Isomerase</keyword>
<keyword id="KW-0442">Lipid degradation</keyword>
<keyword id="KW-0443">Lipid metabolism</keyword>
<keyword id="KW-0456">Lyase</keyword>
<keyword id="KW-0511">Multifunctional enzyme</keyword>
<keyword id="KW-0520">NAD</keyword>
<keyword id="KW-0560">Oxidoreductase</keyword>